<dbReference type="EC" id="2.7.7.59" evidence="1"/>
<dbReference type="EC" id="3.1.4.-" evidence="1"/>
<dbReference type="EMBL" id="CP000494">
    <property type="protein sequence ID" value="ABQ39493.1"/>
    <property type="molecule type" value="Genomic_DNA"/>
</dbReference>
<dbReference type="RefSeq" id="WP_012047384.1">
    <property type="nucleotide sequence ID" value="NC_009485.1"/>
</dbReference>
<dbReference type="SMR" id="A5ETJ9"/>
<dbReference type="STRING" id="288000.BBta_7648"/>
<dbReference type="KEGG" id="bbt:BBta_7648"/>
<dbReference type="eggNOG" id="COG2844">
    <property type="taxonomic scope" value="Bacteria"/>
</dbReference>
<dbReference type="HOGENOM" id="CLU_012833_1_0_5"/>
<dbReference type="OrthoDB" id="9758038at2"/>
<dbReference type="Proteomes" id="UP000000246">
    <property type="component" value="Chromosome"/>
</dbReference>
<dbReference type="GO" id="GO:0008773">
    <property type="term" value="F:[protein-PII] uridylyltransferase activity"/>
    <property type="evidence" value="ECO:0007669"/>
    <property type="project" value="UniProtKB-UniRule"/>
</dbReference>
<dbReference type="GO" id="GO:0008081">
    <property type="term" value="F:phosphoric diester hydrolase activity"/>
    <property type="evidence" value="ECO:0007669"/>
    <property type="project" value="UniProtKB-UniRule"/>
</dbReference>
<dbReference type="GO" id="GO:0009399">
    <property type="term" value="P:nitrogen fixation"/>
    <property type="evidence" value="ECO:0007669"/>
    <property type="project" value="UniProtKB-UniRule"/>
</dbReference>
<dbReference type="GO" id="GO:0006808">
    <property type="term" value="P:regulation of nitrogen utilization"/>
    <property type="evidence" value="ECO:0007669"/>
    <property type="project" value="UniProtKB-UniRule"/>
</dbReference>
<dbReference type="CDD" id="cd04899">
    <property type="entry name" value="ACT_ACR-UUR-like_2"/>
    <property type="match status" value="1"/>
</dbReference>
<dbReference type="CDD" id="cd04900">
    <property type="entry name" value="ACT_UUR-like_1"/>
    <property type="match status" value="1"/>
</dbReference>
<dbReference type="CDD" id="cd05401">
    <property type="entry name" value="NT_GlnE_GlnD_like"/>
    <property type="match status" value="1"/>
</dbReference>
<dbReference type="Gene3D" id="3.30.70.260">
    <property type="match status" value="1"/>
</dbReference>
<dbReference type="Gene3D" id="3.30.460.10">
    <property type="entry name" value="Beta Polymerase, domain 2"/>
    <property type="match status" value="1"/>
</dbReference>
<dbReference type="Gene3D" id="1.10.3090.10">
    <property type="entry name" value="cca-adding enzyme, domain 2"/>
    <property type="match status" value="1"/>
</dbReference>
<dbReference type="HAMAP" id="MF_00277">
    <property type="entry name" value="PII_uridylyl_transf"/>
    <property type="match status" value="1"/>
</dbReference>
<dbReference type="InterPro" id="IPR045865">
    <property type="entry name" value="ACT-like_dom_sf"/>
</dbReference>
<dbReference type="InterPro" id="IPR002912">
    <property type="entry name" value="ACT_dom"/>
</dbReference>
<dbReference type="InterPro" id="IPR003607">
    <property type="entry name" value="HD/PDEase_dom"/>
</dbReference>
<dbReference type="InterPro" id="IPR006674">
    <property type="entry name" value="HD_domain"/>
</dbReference>
<dbReference type="InterPro" id="IPR043519">
    <property type="entry name" value="NT_sf"/>
</dbReference>
<dbReference type="InterPro" id="IPR013546">
    <property type="entry name" value="PII_UdlTrfase/GS_AdlTrfase"/>
</dbReference>
<dbReference type="InterPro" id="IPR002934">
    <property type="entry name" value="Polymerase_NTP_transf_dom"/>
</dbReference>
<dbReference type="InterPro" id="IPR010043">
    <property type="entry name" value="UTase/UR"/>
</dbReference>
<dbReference type="NCBIfam" id="NF003467">
    <property type="entry name" value="PRK05092.1"/>
    <property type="match status" value="1"/>
</dbReference>
<dbReference type="NCBIfam" id="TIGR01693">
    <property type="entry name" value="UTase_glnD"/>
    <property type="match status" value="1"/>
</dbReference>
<dbReference type="PANTHER" id="PTHR47320">
    <property type="entry name" value="BIFUNCTIONAL URIDYLYLTRANSFERASE/URIDYLYL-REMOVING ENZYME"/>
    <property type="match status" value="1"/>
</dbReference>
<dbReference type="PANTHER" id="PTHR47320:SF1">
    <property type="entry name" value="BIFUNCTIONAL URIDYLYLTRANSFERASE_URIDYLYL-REMOVING ENZYME"/>
    <property type="match status" value="1"/>
</dbReference>
<dbReference type="Pfam" id="PF01842">
    <property type="entry name" value="ACT"/>
    <property type="match status" value="1"/>
</dbReference>
<dbReference type="Pfam" id="PF08335">
    <property type="entry name" value="GlnD_UR_UTase"/>
    <property type="match status" value="1"/>
</dbReference>
<dbReference type="Pfam" id="PF01966">
    <property type="entry name" value="HD"/>
    <property type="match status" value="1"/>
</dbReference>
<dbReference type="Pfam" id="PF01909">
    <property type="entry name" value="NTP_transf_2"/>
    <property type="match status" value="1"/>
</dbReference>
<dbReference type="PIRSF" id="PIRSF006288">
    <property type="entry name" value="PII_uridyltransf"/>
    <property type="match status" value="1"/>
</dbReference>
<dbReference type="SMART" id="SM00471">
    <property type="entry name" value="HDc"/>
    <property type="match status" value="1"/>
</dbReference>
<dbReference type="SUPFAM" id="SSF55021">
    <property type="entry name" value="ACT-like"/>
    <property type="match status" value="2"/>
</dbReference>
<dbReference type="SUPFAM" id="SSF81301">
    <property type="entry name" value="Nucleotidyltransferase"/>
    <property type="match status" value="1"/>
</dbReference>
<dbReference type="SUPFAM" id="SSF81593">
    <property type="entry name" value="Nucleotidyltransferase substrate binding subunit/domain"/>
    <property type="match status" value="1"/>
</dbReference>
<dbReference type="SUPFAM" id="SSF81891">
    <property type="entry name" value="Poly A polymerase C-terminal region-like"/>
    <property type="match status" value="1"/>
</dbReference>
<dbReference type="PROSITE" id="PS51671">
    <property type="entry name" value="ACT"/>
    <property type="match status" value="2"/>
</dbReference>
<dbReference type="PROSITE" id="PS51831">
    <property type="entry name" value="HD"/>
    <property type="match status" value="1"/>
</dbReference>
<organism>
    <name type="scientific">Bradyrhizobium sp. (strain BTAi1 / ATCC BAA-1182)</name>
    <dbReference type="NCBI Taxonomy" id="288000"/>
    <lineage>
        <taxon>Bacteria</taxon>
        <taxon>Pseudomonadati</taxon>
        <taxon>Pseudomonadota</taxon>
        <taxon>Alphaproteobacteria</taxon>
        <taxon>Hyphomicrobiales</taxon>
        <taxon>Nitrobacteraceae</taxon>
        <taxon>Bradyrhizobium</taxon>
    </lineage>
</organism>
<accession>A5ETJ9</accession>
<proteinExistence type="inferred from homology"/>
<evidence type="ECO:0000255" key="1">
    <source>
        <dbReference type="HAMAP-Rule" id="MF_00277"/>
    </source>
</evidence>
<evidence type="ECO:0000255" key="2">
    <source>
        <dbReference type="PROSITE-ProRule" id="PRU01175"/>
    </source>
</evidence>
<comment type="function">
    <text evidence="1">Modifies, by uridylylation and deuridylylation, the PII regulatory proteins (GlnB and homologs), in response to the nitrogen status of the cell that GlnD senses through the glutamine level. Under low glutamine levels, catalyzes the conversion of the PII proteins and UTP to PII-UMP and PPi, while under higher glutamine levels, GlnD hydrolyzes PII-UMP to PII and UMP (deuridylylation). Thus, controls uridylylation state and activity of the PII proteins, and plays an important role in the regulation of nitrogen fixation and metabolism.</text>
</comment>
<comment type="catalytic activity">
    <reaction evidence="1">
        <text>[protein-PII]-L-tyrosine + UTP = [protein-PII]-uridylyl-L-tyrosine + diphosphate</text>
        <dbReference type="Rhea" id="RHEA:13673"/>
        <dbReference type="Rhea" id="RHEA-COMP:12147"/>
        <dbReference type="Rhea" id="RHEA-COMP:12148"/>
        <dbReference type="ChEBI" id="CHEBI:33019"/>
        <dbReference type="ChEBI" id="CHEBI:46398"/>
        <dbReference type="ChEBI" id="CHEBI:46858"/>
        <dbReference type="ChEBI" id="CHEBI:90602"/>
        <dbReference type="EC" id="2.7.7.59"/>
    </reaction>
</comment>
<comment type="catalytic activity">
    <reaction evidence="1">
        <text>[protein-PII]-uridylyl-L-tyrosine + H2O = [protein-PII]-L-tyrosine + UMP + H(+)</text>
        <dbReference type="Rhea" id="RHEA:48600"/>
        <dbReference type="Rhea" id="RHEA-COMP:12147"/>
        <dbReference type="Rhea" id="RHEA-COMP:12148"/>
        <dbReference type="ChEBI" id="CHEBI:15377"/>
        <dbReference type="ChEBI" id="CHEBI:15378"/>
        <dbReference type="ChEBI" id="CHEBI:46858"/>
        <dbReference type="ChEBI" id="CHEBI:57865"/>
        <dbReference type="ChEBI" id="CHEBI:90602"/>
    </reaction>
</comment>
<comment type="cofactor">
    <cofactor evidence="1">
        <name>Mg(2+)</name>
        <dbReference type="ChEBI" id="CHEBI:18420"/>
    </cofactor>
</comment>
<comment type="activity regulation">
    <text evidence="1">Uridylyltransferase (UTase) activity is inhibited by glutamine, while glutamine activates uridylyl-removing (UR) activity.</text>
</comment>
<comment type="domain">
    <text evidence="1">Has four distinct domains: an N-terminal nucleotidyltransferase (NT) domain responsible for UTase activity, a central HD domain that encodes UR activity, and two C-terminal ACT domains that seem to have a role in glutamine sensing.</text>
</comment>
<comment type="similarity">
    <text evidence="1">Belongs to the GlnD family.</text>
</comment>
<name>GLND_BRASB</name>
<feature type="chain" id="PRO_1000022327" description="Bifunctional uridylyltransferase/uridylyl-removing enzyme">
    <location>
        <begin position="1"/>
        <end position="931"/>
    </location>
</feature>
<feature type="domain" description="HD" evidence="2">
    <location>
        <begin position="499"/>
        <end position="622"/>
    </location>
</feature>
<feature type="domain" description="ACT 1" evidence="1">
    <location>
        <begin position="740"/>
        <end position="822"/>
    </location>
</feature>
<feature type="domain" description="ACT 2" evidence="1">
    <location>
        <begin position="851"/>
        <end position="931"/>
    </location>
</feature>
<feature type="region of interest" description="Uridylyltransferase">
    <location>
        <begin position="1"/>
        <end position="383"/>
    </location>
</feature>
<feature type="region of interest" description="Uridylyl-removing">
    <location>
        <begin position="384"/>
        <end position="739"/>
    </location>
</feature>
<sequence>MDSVTPNSRPESFPEFDSAGLAAAVDALAAQHSGREDMFRAAVVQLLKAELVKARAVAQAQLLKDRHGRRCAERLCFVQDEIIRILYAAATQHLYRSQVPSGAERMAVVATGGYGRGLMAPESDIDLLFILPYKQTAWGEQVAEAILYSLWDMGLKVGHATRSVDESIRQARGDMTIRTAILETRYLAGDRPLYDELVERFDTEVVQGTAAEFVAAKLAEREERHRRGGQSRYLVEPNVKDGKGGLRDLHTLFWIAKYVYRVRETAELVERGVFDAHEYRTFRRCADFLWSVRCNLHFVSGRPEERLSFDLQREIAVRLGYTSHPGMQDVERFMKHYFLVAKEVGNLTAILCAKLEDQQAKPAPVLSRVISRLKTGNSWRRVPESDDFIVDNNRINLAAPDVFKHDPVNLIRIFRLAQKNNLAFHPDAMRAVTRSLNLINTELRDNPDANRLFMEILTSNDAETVLRRMNETGVLGHFIRAFGRIVSMMQFNMYHHYTVDEHLIRCIGFLQEIERGGIDEFALASDLMRKIRPEHRAVIYISVLLHDVAKGRPEDHSIAGAKVARRLCPRLGFNNADTELVAWLIEEHLTMSTVAQSRDLSDRRTIEKFAAVVQSVEQMKLLTILTTADIRGVGPGVWNGWKAQLLRTLYYETEPVLTGGFSEVNRAKRITAAQAEFRNAFTDWPEDELNTYIGRHYPAYWLKVELPRKIRHARFVRASEDAGHKLAINVGFDPARGVTELTIFAMDHPWLLSIIAGACASAGANIVDAQIYTTTDGRALDTIAISREYERDEDEGRRATRIGETIEQVLEGKLRLPDAVARRTTRGKQHKAFSVEPEVSINNQWSELYTVIEVSGLDRPGLLYELTTAISKLNLNIASAHVATFGERARDVFYVTDLLGAQINAPTRQAAIKSALLHLLASDDTAAQPAA</sequence>
<gene>
    <name evidence="1" type="primary">glnD</name>
    <name type="ordered locus">BBta_7648</name>
</gene>
<protein>
    <recommendedName>
        <fullName evidence="1">Bifunctional uridylyltransferase/uridylyl-removing enzyme</fullName>
        <shortName evidence="1">UTase/UR</shortName>
    </recommendedName>
    <alternativeName>
        <fullName evidence="1">Bifunctional [protein-PII] modification enzyme</fullName>
    </alternativeName>
    <alternativeName>
        <fullName evidence="1">Bifunctional nitrogen sensor protein</fullName>
    </alternativeName>
    <domain>
        <recommendedName>
            <fullName evidence="1">[Protein-PII] uridylyltransferase</fullName>
            <shortName evidence="1">PII uridylyltransferase</shortName>
            <shortName evidence="1">UTase</shortName>
            <ecNumber evidence="1">2.7.7.59</ecNumber>
        </recommendedName>
    </domain>
    <domain>
        <recommendedName>
            <fullName evidence="1">[Protein-PII]-UMP uridylyl-removing enzyme</fullName>
            <shortName evidence="1">UR</shortName>
            <ecNumber evidence="1">3.1.4.-</ecNumber>
        </recommendedName>
    </domain>
</protein>
<reference key="1">
    <citation type="journal article" date="2007" name="Science">
        <title>Legumes symbioses: absence of nod genes in photosynthetic bradyrhizobia.</title>
        <authorList>
            <person name="Giraud E."/>
            <person name="Moulin L."/>
            <person name="Vallenet D."/>
            <person name="Barbe V."/>
            <person name="Cytryn E."/>
            <person name="Avarre J.-C."/>
            <person name="Jaubert M."/>
            <person name="Simon D."/>
            <person name="Cartieaux F."/>
            <person name="Prin Y."/>
            <person name="Bena G."/>
            <person name="Hannibal L."/>
            <person name="Fardoux J."/>
            <person name="Kojadinovic M."/>
            <person name="Vuillet L."/>
            <person name="Lajus A."/>
            <person name="Cruveiller S."/>
            <person name="Rouy Z."/>
            <person name="Mangenot S."/>
            <person name="Segurens B."/>
            <person name="Dossat C."/>
            <person name="Franck W.L."/>
            <person name="Chang W.-S."/>
            <person name="Saunders E."/>
            <person name="Bruce D."/>
            <person name="Richardson P."/>
            <person name="Normand P."/>
            <person name="Dreyfus B."/>
            <person name="Pignol D."/>
            <person name="Stacey G."/>
            <person name="Emerich D."/>
            <person name="Vermeglio A."/>
            <person name="Medigue C."/>
            <person name="Sadowsky M."/>
        </authorList>
    </citation>
    <scope>NUCLEOTIDE SEQUENCE [LARGE SCALE GENOMIC DNA]</scope>
    <source>
        <strain>BTAi1 / ATCC BAA-1182</strain>
    </source>
</reference>
<keyword id="KW-0378">Hydrolase</keyword>
<keyword id="KW-0460">Magnesium</keyword>
<keyword id="KW-0511">Multifunctional enzyme</keyword>
<keyword id="KW-0535">Nitrogen fixation</keyword>
<keyword id="KW-0548">Nucleotidyltransferase</keyword>
<keyword id="KW-1185">Reference proteome</keyword>
<keyword id="KW-0677">Repeat</keyword>
<keyword id="KW-0808">Transferase</keyword>